<name>APBE_CHLPN</name>
<gene>
    <name type="primary">apbE</name>
    <name type="ordered locus">CPn_0336</name>
    <name type="ordered locus">CP_0422</name>
    <name type="ordered locus">CpB0346</name>
</gene>
<reference key="1">
    <citation type="journal article" date="1999" name="Nat. Genet.">
        <title>Comparative genomes of Chlamydia pneumoniae and C. trachomatis.</title>
        <authorList>
            <person name="Kalman S."/>
            <person name="Mitchell W.P."/>
            <person name="Marathe R."/>
            <person name="Lammel C.J."/>
            <person name="Fan J."/>
            <person name="Hyman R.W."/>
            <person name="Olinger L."/>
            <person name="Grimwood J."/>
            <person name="Davis R.W."/>
            <person name="Stephens R.S."/>
        </authorList>
    </citation>
    <scope>NUCLEOTIDE SEQUENCE [LARGE SCALE GENOMIC DNA]</scope>
    <source>
        <strain>CWL029</strain>
    </source>
</reference>
<reference key="2">
    <citation type="journal article" date="2000" name="Nucleic Acids Res.">
        <title>Genome sequences of Chlamydia trachomatis MoPn and Chlamydia pneumoniae AR39.</title>
        <authorList>
            <person name="Read T.D."/>
            <person name="Brunham R.C."/>
            <person name="Shen C."/>
            <person name="Gill S.R."/>
            <person name="Heidelberg J.F."/>
            <person name="White O."/>
            <person name="Hickey E.K."/>
            <person name="Peterson J.D."/>
            <person name="Utterback T.R."/>
            <person name="Berry K.J."/>
            <person name="Bass S."/>
            <person name="Linher K.D."/>
            <person name="Weidman J.F."/>
            <person name="Khouri H.M."/>
            <person name="Craven B."/>
            <person name="Bowman C."/>
            <person name="Dodson R.J."/>
            <person name="Gwinn M.L."/>
            <person name="Nelson W.C."/>
            <person name="DeBoy R.T."/>
            <person name="Kolonay J.F."/>
            <person name="McClarty G."/>
            <person name="Salzberg S.L."/>
            <person name="Eisen J.A."/>
            <person name="Fraser C.M."/>
        </authorList>
    </citation>
    <scope>NUCLEOTIDE SEQUENCE [LARGE SCALE GENOMIC DNA]</scope>
    <source>
        <strain>AR39</strain>
    </source>
</reference>
<reference key="3">
    <citation type="journal article" date="2000" name="Nucleic Acids Res.">
        <title>Comparison of whole genome sequences of Chlamydia pneumoniae J138 from Japan and CWL029 from USA.</title>
        <authorList>
            <person name="Shirai M."/>
            <person name="Hirakawa H."/>
            <person name="Kimoto M."/>
            <person name="Tabuchi M."/>
            <person name="Kishi F."/>
            <person name="Ouchi K."/>
            <person name="Shiba T."/>
            <person name="Ishii K."/>
            <person name="Hattori M."/>
            <person name="Kuhara S."/>
            <person name="Nakazawa T."/>
        </authorList>
    </citation>
    <scope>NUCLEOTIDE SEQUENCE [LARGE SCALE GENOMIC DNA]</scope>
    <source>
        <strain>J138</strain>
    </source>
</reference>
<reference key="4">
    <citation type="submission" date="2002-05" db="EMBL/GenBank/DDBJ databases">
        <title>The genome sequence of Chlamydia pneumoniae TW183 and comparison with other Chlamydia strains based on whole genome sequence analysis.</title>
        <authorList>
            <person name="Geng M.M."/>
            <person name="Schuhmacher A."/>
            <person name="Muehldorfer I."/>
            <person name="Bensch K.W."/>
            <person name="Schaefer K.P."/>
            <person name="Schneider S."/>
            <person name="Pohl T."/>
            <person name="Essig A."/>
            <person name="Marre R."/>
            <person name="Melchers K."/>
        </authorList>
    </citation>
    <scope>NUCLEOTIDE SEQUENCE [LARGE SCALE GENOMIC DNA]</scope>
    <source>
        <strain>TW-183</strain>
    </source>
</reference>
<keyword id="KW-0997">Cell inner membrane</keyword>
<keyword id="KW-1003">Cell membrane</keyword>
<keyword id="KW-0274">FAD</keyword>
<keyword id="KW-0285">Flavoprotein</keyword>
<keyword id="KW-0449">Lipoprotein</keyword>
<keyword id="KW-0460">Magnesium</keyword>
<keyword id="KW-0472">Membrane</keyword>
<keyword id="KW-0479">Metal-binding</keyword>
<keyword id="KW-0564">Palmitate</keyword>
<keyword id="KW-0732">Signal</keyword>
<keyword id="KW-0808">Transferase</keyword>
<dbReference type="EC" id="2.7.1.180" evidence="1"/>
<dbReference type="EMBL" id="AE001363">
    <property type="protein sequence ID" value="AAD18485.1"/>
    <property type="molecule type" value="Genomic_DNA"/>
</dbReference>
<dbReference type="EMBL" id="AE002161">
    <property type="protein sequence ID" value="AAF38265.1"/>
    <property type="molecule type" value="Genomic_DNA"/>
</dbReference>
<dbReference type="EMBL" id="BA000008">
    <property type="protein sequence ID" value="BAA98546.1"/>
    <property type="molecule type" value="Genomic_DNA"/>
</dbReference>
<dbReference type="EMBL" id="AE009440">
    <property type="protein sequence ID" value="AAP98278.1"/>
    <property type="molecule type" value="Genomic_DNA"/>
</dbReference>
<dbReference type="PIR" id="F72090">
    <property type="entry name" value="F72090"/>
</dbReference>
<dbReference type="PIR" id="H86532">
    <property type="entry name" value="H86532"/>
</dbReference>
<dbReference type="RefSeq" id="NP_224541.1">
    <property type="nucleotide sequence ID" value="NC_000922.1"/>
</dbReference>
<dbReference type="RefSeq" id="WP_010882984.1">
    <property type="nucleotide sequence ID" value="NZ_LN847257.1"/>
</dbReference>
<dbReference type="SMR" id="Q9Z8K2"/>
<dbReference type="STRING" id="406984.CPK_ORF00846"/>
<dbReference type="GeneID" id="45050384"/>
<dbReference type="KEGG" id="cpa:CP_0422"/>
<dbReference type="KEGG" id="cpj:yojL"/>
<dbReference type="KEGG" id="cpn:CPn_0336"/>
<dbReference type="KEGG" id="cpt:CpB0346"/>
<dbReference type="PATRIC" id="fig|115713.3.peg.371"/>
<dbReference type="eggNOG" id="COG1477">
    <property type="taxonomic scope" value="Bacteria"/>
</dbReference>
<dbReference type="HOGENOM" id="CLU_044403_0_1_0"/>
<dbReference type="OrthoDB" id="9778595at2"/>
<dbReference type="Proteomes" id="UP000000583">
    <property type="component" value="Chromosome"/>
</dbReference>
<dbReference type="Proteomes" id="UP000000801">
    <property type="component" value="Chromosome"/>
</dbReference>
<dbReference type="GO" id="GO:0005886">
    <property type="term" value="C:plasma membrane"/>
    <property type="evidence" value="ECO:0007669"/>
    <property type="project" value="UniProtKB-SubCell"/>
</dbReference>
<dbReference type="GO" id="GO:0046872">
    <property type="term" value="F:metal ion binding"/>
    <property type="evidence" value="ECO:0007669"/>
    <property type="project" value="UniProtKB-KW"/>
</dbReference>
<dbReference type="GO" id="GO:0016740">
    <property type="term" value="F:transferase activity"/>
    <property type="evidence" value="ECO:0007669"/>
    <property type="project" value="UniProtKB-KW"/>
</dbReference>
<dbReference type="Gene3D" id="3.10.520.10">
    <property type="entry name" value="ApbE-like domains"/>
    <property type="match status" value="1"/>
</dbReference>
<dbReference type="InterPro" id="IPR024932">
    <property type="entry name" value="ApbE"/>
</dbReference>
<dbReference type="InterPro" id="IPR003374">
    <property type="entry name" value="ApbE-like_sf"/>
</dbReference>
<dbReference type="PANTHER" id="PTHR30040:SF2">
    <property type="entry name" value="FAD:PROTEIN FMN TRANSFERASE"/>
    <property type="match status" value="1"/>
</dbReference>
<dbReference type="PANTHER" id="PTHR30040">
    <property type="entry name" value="THIAMINE BIOSYNTHESIS LIPOPROTEIN APBE"/>
    <property type="match status" value="1"/>
</dbReference>
<dbReference type="Pfam" id="PF02424">
    <property type="entry name" value="ApbE"/>
    <property type="match status" value="1"/>
</dbReference>
<dbReference type="PIRSF" id="PIRSF006268">
    <property type="entry name" value="ApbE"/>
    <property type="match status" value="1"/>
</dbReference>
<dbReference type="SUPFAM" id="SSF143631">
    <property type="entry name" value="ApbE-like"/>
    <property type="match status" value="1"/>
</dbReference>
<dbReference type="PROSITE" id="PS51257">
    <property type="entry name" value="PROKAR_LIPOPROTEIN"/>
    <property type="match status" value="1"/>
</dbReference>
<proteinExistence type="inferred from homology"/>
<sequence>MAMLPKFFLVLLCLGLCSCSQKTTTIEGEQMTIFYRIVLGTSLSAKEKASLSQQIDRCFHKIDSIYNNWNPYSELSIINRAPADVPITLSVELSEFLDQVDTLYKLSEGRFDPTVGPLKTLWLLHLKSQTLPPKDVWEQHYKDMGWQHLEFQSNTKTLIKKNPHVQIDLCGVVKGYAVDCLNEICNTFCPNNYVEWGGEIKTSGHHPSGRPWRIFSEAAGTILDIDDMAIATSGNHIQKWCVEGKIYTHILDTRTGKPLELSSYPIQSVSVVHPSCAYADAIATVLMTFDSKIEAKQWAEEHHILTYINDGASS</sequence>
<comment type="function">
    <text evidence="1">Flavin transferase that catalyzes the transfer of the FMN moiety of FAD and its covalent binding to the hydroxyl group of a threonine residue in a target flavoprotein such as NqrB and NqrC, two subunits of the NQR complex.</text>
</comment>
<comment type="catalytic activity">
    <reaction evidence="1">
        <text>L-threonyl-[protein] + FAD = FMN-L-threonyl-[protein] + AMP + H(+)</text>
        <dbReference type="Rhea" id="RHEA:36847"/>
        <dbReference type="Rhea" id="RHEA-COMP:11060"/>
        <dbReference type="Rhea" id="RHEA-COMP:11061"/>
        <dbReference type="ChEBI" id="CHEBI:15378"/>
        <dbReference type="ChEBI" id="CHEBI:30013"/>
        <dbReference type="ChEBI" id="CHEBI:57692"/>
        <dbReference type="ChEBI" id="CHEBI:74257"/>
        <dbReference type="ChEBI" id="CHEBI:456215"/>
        <dbReference type="EC" id="2.7.1.180"/>
    </reaction>
</comment>
<comment type="cofactor">
    <cofactor evidence="1">
        <name>Mg(2+)</name>
        <dbReference type="ChEBI" id="CHEBI:18420"/>
    </cofactor>
</comment>
<comment type="subcellular location">
    <subcellularLocation>
        <location evidence="3 4">Cell inner membrane</location>
        <topology evidence="3 4">Lipid-anchor</topology>
        <orientation evidence="3">Periplasmic side</orientation>
    </subcellularLocation>
</comment>
<comment type="similarity">
    <text evidence="5">Belongs to the ApbE family.</text>
</comment>
<evidence type="ECO:0000250" key="1">
    <source>
        <dbReference type="UniProtKB" id="A5F5Y3"/>
    </source>
</evidence>
<evidence type="ECO:0000250" key="2">
    <source>
        <dbReference type="UniProtKB" id="O83774"/>
    </source>
</evidence>
<evidence type="ECO:0000250" key="3">
    <source>
        <dbReference type="UniProtKB" id="P41780"/>
    </source>
</evidence>
<evidence type="ECO:0000255" key="4">
    <source>
        <dbReference type="PROSITE-ProRule" id="PRU00303"/>
    </source>
</evidence>
<evidence type="ECO:0000305" key="5"/>
<protein>
    <recommendedName>
        <fullName evidence="1">FAD:protein FMN transferase</fullName>
        <ecNumber evidence="1">2.7.1.180</ecNumber>
    </recommendedName>
    <alternativeName>
        <fullName evidence="1">Flavin transferase</fullName>
    </alternativeName>
</protein>
<accession>Q9Z8K2</accession>
<accession>Q9JQA3</accession>
<feature type="signal peptide" evidence="4">
    <location>
        <begin position="1"/>
        <end position="18"/>
    </location>
</feature>
<feature type="chain" id="PRO_0000001746" description="FAD:protein FMN transferase">
    <location>
        <begin position="19"/>
        <end position="314"/>
    </location>
</feature>
<feature type="binding site" evidence="3">
    <location>
        <position position="31"/>
    </location>
    <ligand>
        <name>FAD</name>
        <dbReference type="ChEBI" id="CHEBI:57692"/>
    </ligand>
</feature>
<feature type="binding site" evidence="3">
    <location>
        <position position="69"/>
    </location>
    <ligand>
        <name>FAD</name>
        <dbReference type="ChEBI" id="CHEBI:57692"/>
    </ligand>
</feature>
<feature type="binding site" evidence="3">
    <location>
        <begin position="110"/>
        <end position="112"/>
    </location>
    <ligand>
        <name>FAD</name>
        <dbReference type="ChEBI" id="CHEBI:57692"/>
    </ligand>
</feature>
<feature type="binding site" evidence="3">
    <location>
        <position position="168"/>
    </location>
    <ligand>
        <name>FAD</name>
        <dbReference type="ChEBI" id="CHEBI:57692"/>
    </ligand>
</feature>
<feature type="binding site" evidence="2">
    <location>
        <position position="171"/>
    </location>
    <ligand>
        <name>Mg(2+)</name>
        <dbReference type="ChEBI" id="CHEBI:18420"/>
    </ligand>
</feature>
<feature type="binding site" evidence="2">
    <location>
        <position position="174"/>
    </location>
    <ligand>
        <name>FAD</name>
        <dbReference type="ChEBI" id="CHEBI:57692"/>
    </ligand>
</feature>
<feature type="binding site" evidence="3">
    <location>
        <position position="251"/>
    </location>
    <ligand>
        <name>FAD</name>
        <dbReference type="ChEBI" id="CHEBI:57692"/>
    </ligand>
</feature>
<feature type="binding site" evidence="2">
    <location>
        <position position="280"/>
    </location>
    <ligand>
        <name>Mg(2+)</name>
        <dbReference type="ChEBI" id="CHEBI:18420"/>
    </ligand>
</feature>
<feature type="binding site" evidence="2">
    <location>
        <position position="284"/>
    </location>
    <ligand>
        <name>Mg(2+)</name>
        <dbReference type="ChEBI" id="CHEBI:18420"/>
    </ligand>
</feature>
<feature type="lipid moiety-binding region" description="N-palmitoyl cysteine" evidence="4">
    <location>
        <position position="19"/>
    </location>
</feature>
<feature type="lipid moiety-binding region" description="S-diacylglycerol cysteine" evidence="4">
    <location>
        <position position="19"/>
    </location>
</feature>
<organism>
    <name type="scientific">Chlamydia pneumoniae</name>
    <name type="common">Chlamydophila pneumoniae</name>
    <dbReference type="NCBI Taxonomy" id="83558"/>
    <lineage>
        <taxon>Bacteria</taxon>
        <taxon>Pseudomonadati</taxon>
        <taxon>Chlamydiota</taxon>
        <taxon>Chlamydiia</taxon>
        <taxon>Chlamydiales</taxon>
        <taxon>Chlamydiaceae</taxon>
        <taxon>Chlamydia/Chlamydophila group</taxon>
        <taxon>Chlamydia</taxon>
    </lineage>
</organism>